<evidence type="ECO:0000250" key="1"/>
<evidence type="ECO:0000305" key="2"/>
<feature type="chain" id="PRO_0000417660" description="Probable trehalose-phosphate phosphatase 8">
    <location>
        <begin position="1"/>
        <end position="500"/>
    </location>
</feature>
<gene>
    <name type="primary">TPP8</name>
    <name type="ordered locus">Os06g0222100</name>
    <name type="ordered locus">LOC_Os06g11840</name>
    <name type="ORF">P0516A04.26</name>
</gene>
<comment type="function">
    <text evidence="1">Removes the phosphate from trehalose 6-phosphate to produce free trehalose. Trehalose accumulation in plant may improve abiotic stress tolerance (By similarity).</text>
</comment>
<comment type="catalytic activity">
    <reaction>
        <text>alpha,alpha-trehalose 6-phosphate + H2O = alpha,alpha-trehalose + phosphate</text>
        <dbReference type="Rhea" id="RHEA:23420"/>
        <dbReference type="ChEBI" id="CHEBI:15377"/>
        <dbReference type="ChEBI" id="CHEBI:16551"/>
        <dbReference type="ChEBI" id="CHEBI:43474"/>
        <dbReference type="ChEBI" id="CHEBI:58429"/>
        <dbReference type="EC" id="3.1.3.12"/>
    </reaction>
</comment>
<comment type="cofactor">
    <cofactor evidence="1">
        <name>a divalent metal cation</name>
        <dbReference type="ChEBI" id="CHEBI:60240"/>
    </cofactor>
</comment>
<comment type="pathway">
    <text>Glycan biosynthesis; trehalose biosynthesis.</text>
</comment>
<comment type="similarity">
    <text evidence="2">Belongs to the trehalose phosphatase family.</text>
</comment>
<comment type="sequence caution" evidence="2">
    <conflict type="erroneous gene model prediction">
        <sequence resource="EMBL-CDS" id="BAD37685"/>
    </conflict>
</comment>
<comment type="sequence caution" evidence="2">
    <conflict type="erroneous initiation">
        <sequence resource="EMBL-CDS" id="BAF19092"/>
    </conflict>
    <text>Truncated N-terminus.</text>
</comment>
<name>TPP8_ORYSJ</name>
<proteinExistence type="evidence at transcript level"/>
<dbReference type="EC" id="3.1.3.12"/>
<dbReference type="EMBL" id="AP004727">
    <property type="protein sequence ID" value="BAD37685.1"/>
    <property type="status" value="ALT_SEQ"/>
    <property type="molecule type" value="Genomic_DNA"/>
</dbReference>
<dbReference type="EMBL" id="AP008212">
    <property type="protein sequence ID" value="BAF19092.2"/>
    <property type="status" value="ALT_INIT"/>
    <property type="molecule type" value="Genomic_DNA"/>
</dbReference>
<dbReference type="EMBL" id="AP014962">
    <property type="status" value="NOT_ANNOTATED_CDS"/>
    <property type="molecule type" value="Genomic_DNA"/>
</dbReference>
<dbReference type="SMR" id="Q0DDI1"/>
<dbReference type="FunCoup" id="Q0DDI1">
    <property type="interactions" value="9"/>
</dbReference>
<dbReference type="STRING" id="39947.Q0DDI1"/>
<dbReference type="PaxDb" id="39947-Q0DDI1"/>
<dbReference type="KEGG" id="dosa:Os06g0222100"/>
<dbReference type="eggNOG" id="KOG1050">
    <property type="taxonomic scope" value="Eukaryota"/>
</dbReference>
<dbReference type="InParanoid" id="Q0DDI1"/>
<dbReference type="UniPathway" id="UPA00299"/>
<dbReference type="Proteomes" id="UP000000763">
    <property type="component" value="Chromosome 6"/>
</dbReference>
<dbReference type="Proteomes" id="UP000059680">
    <property type="component" value="Chromosome 6"/>
</dbReference>
<dbReference type="GO" id="GO:0004805">
    <property type="term" value="F:trehalose-phosphatase activity"/>
    <property type="evidence" value="ECO:0000318"/>
    <property type="project" value="GO_Central"/>
</dbReference>
<dbReference type="GO" id="GO:0005992">
    <property type="term" value="P:trehalose biosynthetic process"/>
    <property type="evidence" value="ECO:0000318"/>
    <property type="project" value="GO_Central"/>
</dbReference>
<dbReference type="CDD" id="cd01627">
    <property type="entry name" value="HAD_TPP"/>
    <property type="match status" value="1"/>
</dbReference>
<dbReference type="FunFam" id="3.30.70.1020:FF:000004">
    <property type="entry name" value="Trehalose 6-phosphate phosphatase"/>
    <property type="match status" value="1"/>
</dbReference>
<dbReference type="FunFam" id="3.40.50.1000:FF:000073">
    <property type="entry name" value="Trehalose 6-phosphate phosphatase"/>
    <property type="match status" value="1"/>
</dbReference>
<dbReference type="Gene3D" id="3.40.50.1000">
    <property type="entry name" value="HAD superfamily/HAD-like"/>
    <property type="match status" value="1"/>
</dbReference>
<dbReference type="Gene3D" id="3.30.70.1020">
    <property type="entry name" value="Trehalose-6-phosphate phosphatase related protein, domain 2"/>
    <property type="match status" value="1"/>
</dbReference>
<dbReference type="InterPro" id="IPR036412">
    <property type="entry name" value="HAD-like_sf"/>
</dbReference>
<dbReference type="InterPro" id="IPR006379">
    <property type="entry name" value="HAD-SF_hydro_IIB"/>
</dbReference>
<dbReference type="InterPro" id="IPR023214">
    <property type="entry name" value="HAD_sf"/>
</dbReference>
<dbReference type="InterPro" id="IPR044651">
    <property type="entry name" value="OTSB-like"/>
</dbReference>
<dbReference type="InterPro" id="IPR003337">
    <property type="entry name" value="Trehalose_PPase"/>
</dbReference>
<dbReference type="NCBIfam" id="TIGR01484">
    <property type="entry name" value="HAD-SF-IIB"/>
    <property type="match status" value="1"/>
</dbReference>
<dbReference type="NCBIfam" id="TIGR00685">
    <property type="entry name" value="T6PP"/>
    <property type="match status" value="1"/>
</dbReference>
<dbReference type="PANTHER" id="PTHR43768">
    <property type="entry name" value="TREHALOSE 6-PHOSPHATE PHOSPHATASE"/>
    <property type="match status" value="1"/>
</dbReference>
<dbReference type="PANTHER" id="PTHR43768:SF10">
    <property type="entry name" value="TREHALOSE-PHOSPHATE PHOSPHATASE 8-RELATED"/>
    <property type="match status" value="1"/>
</dbReference>
<dbReference type="Pfam" id="PF02358">
    <property type="entry name" value="Trehalose_PPase"/>
    <property type="match status" value="1"/>
</dbReference>
<dbReference type="SUPFAM" id="SSF56784">
    <property type="entry name" value="HAD-like"/>
    <property type="match status" value="1"/>
</dbReference>
<sequence>MTNQDVVMPDIAAAAAMPGSSGRAPLFACRGAAAVSASSMLGGGGAAYQAAVVAHVAPVPAIRPCASWVVEAMRASSPTRPAAAAVDAEYDAWTQRKHPSALGSFEQVAAAASGKRVVVFLDYDGTLSPIVADPDMAFMSDEMRAAVRDVAEHFPAAIVTGRCVDKVQSFVGLPELYYAGSHGMDIKGPSSNEEEDTKILLQPAREFLPVINKAYKALMEKTKSTPGARVENNKFCLSVHFRCVDEKRWNPLAEQVKAVLRDYPELKLTQGRKVLEIRPSIMWDKGKAVEFLLKSLGFDDDRRDVLPVYIGDDRTDEDAFKVLRKRGQGLGILVSKCAKETDASYSLQDPAEKYTNAGAHVFVTMLLTVVFTAAVALALVNAVNSHDFAAHLAGVDCRMGLAGPVRCPASGFVELLVLALHVVRCVLAILDRLHACLMSPSLQLSIASPCHGVPCSIGAVEASAIIVSDAPEGLISTLTTDHIYYMTVFPAKLALTSEEV</sequence>
<organism>
    <name type="scientific">Oryza sativa subsp. japonica</name>
    <name type="common">Rice</name>
    <dbReference type="NCBI Taxonomy" id="39947"/>
    <lineage>
        <taxon>Eukaryota</taxon>
        <taxon>Viridiplantae</taxon>
        <taxon>Streptophyta</taxon>
        <taxon>Embryophyta</taxon>
        <taxon>Tracheophyta</taxon>
        <taxon>Spermatophyta</taxon>
        <taxon>Magnoliopsida</taxon>
        <taxon>Liliopsida</taxon>
        <taxon>Poales</taxon>
        <taxon>Poaceae</taxon>
        <taxon>BOP clade</taxon>
        <taxon>Oryzoideae</taxon>
        <taxon>Oryzeae</taxon>
        <taxon>Oryzinae</taxon>
        <taxon>Oryza</taxon>
        <taxon>Oryza sativa</taxon>
    </lineage>
</organism>
<keyword id="KW-0378">Hydrolase</keyword>
<keyword id="KW-1185">Reference proteome</keyword>
<keyword id="KW-0346">Stress response</keyword>
<protein>
    <recommendedName>
        <fullName>Probable trehalose-phosphate phosphatase 8</fullName>
        <shortName>OsTPP8</shortName>
        <ecNumber>3.1.3.12</ecNumber>
    </recommendedName>
    <alternativeName>
        <fullName>Trehalose 6-phosphate phosphatase</fullName>
    </alternativeName>
</protein>
<reference key="1">
    <citation type="journal article" date="2005" name="Nature">
        <title>The map-based sequence of the rice genome.</title>
        <authorList>
            <consortium name="International rice genome sequencing project (IRGSP)"/>
        </authorList>
    </citation>
    <scope>NUCLEOTIDE SEQUENCE [LARGE SCALE GENOMIC DNA]</scope>
    <source>
        <strain>cv. Nipponbare</strain>
    </source>
</reference>
<reference key="2">
    <citation type="journal article" date="2008" name="Nucleic Acids Res.">
        <title>The rice annotation project database (RAP-DB): 2008 update.</title>
        <authorList>
            <consortium name="The rice annotation project (RAP)"/>
        </authorList>
    </citation>
    <scope>GENOME REANNOTATION</scope>
    <source>
        <strain>cv. Nipponbare</strain>
    </source>
</reference>
<reference key="3">
    <citation type="journal article" date="2013" name="Rice">
        <title>Improvement of the Oryza sativa Nipponbare reference genome using next generation sequence and optical map data.</title>
        <authorList>
            <person name="Kawahara Y."/>
            <person name="de la Bastide M."/>
            <person name="Hamilton J.P."/>
            <person name="Kanamori H."/>
            <person name="McCombie W.R."/>
            <person name="Ouyang S."/>
            <person name="Schwartz D.C."/>
            <person name="Tanaka T."/>
            <person name="Wu J."/>
            <person name="Zhou S."/>
            <person name="Childs K.L."/>
            <person name="Davidson R.M."/>
            <person name="Lin H."/>
            <person name="Quesada-Ocampo L."/>
            <person name="Vaillancourt B."/>
            <person name="Sakai H."/>
            <person name="Lee S.S."/>
            <person name="Kim J."/>
            <person name="Numa H."/>
            <person name="Itoh T."/>
            <person name="Buell C.R."/>
            <person name="Matsumoto T."/>
        </authorList>
    </citation>
    <scope>GENOME REANNOTATION</scope>
    <source>
        <strain>cv. Nipponbare</strain>
    </source>
</reference>
<reference key="4">
    <citation type="journal article" date="2005" name="Plant Mol. Biol.">
        <title>Functional identification of a trehalose 6-phosphate phosphatase gene that is involved in transient induction of trehalose biosynthesis during chilling stress in rice.</title>
        <authorList>
            <person name="Pramanik M.H."/>
            <person name="Imai R."/>
        </authorList>
    </citation>
    <scope>GENE FAMILY</scope>
    <scope>NOMENCLATURE</scope>
    <source>
        <strain>cv. Yukihikari</strain>
    </source>
</reference>
<accession>Q0DDI1</accession>
<accession>Q67VY4</accession>